<comment type="function">
    <text evidence="1">Catalyzes the interconversion of L-rhamnose and L-rhamnulose.</text>
</comment>
<comment type="catalytic activity">
    <reaction evidence="1">
        <text>L-rhamnopyranose = L-rhamnulose</text>
        <dbReference type="Rhea" id="RHEA:23160"/>
        <dbReference type="ChEBI" id="CHEBI:17897"/>
        <dbReference type="ChEBI" id="CHEBI:62346"/>
        <dbReference type="EC" id="5.3.1.14"/>
    </reaction>
</comment>
<comment type="cofactor">
    <cofactor evidence="1">
        <name>Mn(2+)</name>
        <dbReference type="ChEBI" id="CHEBI:29035"/>
    </cofactor>
    <text evidence="1">Binds 1 Mn(2+) ion per subunit.</text>
</comment>
<comment type="pathway">
    <text evidence="1">Carbohydrate degradation; L-rhamnose degradation; glycerone phosphate from L-rhamnose: step 1/3.</text>
</comment>
<comment type="subcellular location">
    <subcellularLocation>
        <location evidence="1">Cytoplasm</location>
    </subcellularLocation>
</comment>
<comment type="similarity">
    <text evidence="1">Belongs to the rhamnose isomerase family.</text>
</comment>
<gene>
    <name evidence="1" type="primary">rhaA</name>
    <name type="ordered locus">EF_0434</name>
</gene>
<reference key="1">
    <citation type="journal article" date="2003" name="Science">
        <title>Role of mobile DNA in the evolution of vancomycin-resistant Enterococcus faecalis.</title>
        <authorList>
            <person name="Paulsen I.T."/>
            <person name="Banerjei L."/>
            <person name="Myers G.S.A."/>
            <person name="Nelson K.E."/>
            <person name="Seshadri R."/>
            <person name="Read T.D."/>
            <person name="Fouts D.E."/>
            <person name="Eisen J.A."/>
            <person name="Gill S.R."/>
            <person name="Heidelberg J.F."/>
            <person name="Tettelin H."/>
            <person name="Dodson R.J."/>
            <person name="Umayam L.A."/>
            <person name="Brinkac L.M."/>
            <person name="Beanan M.J."/>
            <person name="Daugherty S.C."/>
            <person name="DeBoy R.T."/>
            <person name="Durkin S.A."/>
            <person name="Kolonay J.F."/>
            <person name="Madupu R."/>
            <person name="Nelson W.C."/>
            <person name="Vamathevan J.J."/>
            <person name="Tran B."/>
            <person name="Upton J."/>
            <person name="Hansen T."/>
            <person name="Shetty J."/>
            <person name="Khouri H.M."/>
            <person name="Utterback T.R."/>
            <person name="Radune D."/>
            <person name="Ketchum K.A."/>
            <person name="Dougherty B.A."/>
            <person name="Fraser C.M."/>
        </authorList>
    </citation>
    <scope>NUCLEOTIDE SEQUENCE [LARGE SCALE GENOMIC DNA]</scope>
    <source>
        <strain>ATCC 700802 / V583</strain>
    </source>
</reference>
<proteinExistence type="inferred from homology"/>
<name>RHAA_ENTFA</name>
<organism>
    <name type="scientific">Enterococcus faecalis (strain ATCC 700802 / V583)</name>
    <dbReference type="NCBI Taxonomy" id="226185"/>
    <lineage>
        <taxon>Bacteria</taxon>
        <taxon>Bacillati</taxon>
        <taxon>Bacillota</taxon>
        <taxon>Bacilli</taxon>
        <taxon>Lactobacillales</taxon>
        <taxon>Enterococcaceae</taxon>
        <taxon>Enterococcus</taxon>
    </lineage>
</organism>
<keyword id="KW-0963">Cytoplasm</keyword>
<keyword id="KW-0413">Isomerase</keyword>
<keyword id="KW-0464">Manganese</keyword>
<keyword id="KW-0479">Metal-binding</keyword>
<keyword id="KW-1185">Reference proteome</keyword>
<keyword id="KW-0684">Rhamnose metabolism</keyword>
<dbReference type="EC" id="5.3.1.14" evidence="1"/>
<dbReference type="EMBL" id="AE016830">
    <property type="protein sequence ID" value="AAO80290.1"/>
    <property type="molecule type" value="Genomic_DNA"/>
</dbReference>
<dbReference type="RefSeq" id="NP_814219.1">
    <property type="nucleotide sequence ID" value="NC_004668.1"/>
</dbReference>
<dbReference type="RefSeq" id="WP_002387675.1">
    <property type="nucleotide sequence ID" value="NZ_KE136524.1"/>
</dbReference>
<dbReference type="SMR" id="Q838L2"/>
<dbReference type="STRING" id="226185.EF_0434"/>
<dbReference type="EnsemblBacteria" id="AAO80290">
    <property type="protein sequence ID" value="AAO80290"/>
    <property type="gene ID" value="EF_0434"/>
</dbReference>
<dbReference type="KEGG" id="efa:EF0434"/>
<dbReference type="PATRIC" id="fig|226185.45.peg.2899"/>
<dbReference type="eggNOG" id="COG4806">
    <property type="taxonomic scope" value="Bacteria"/>
</dbReference>
<dbReference type="HOGENOM" id="CLU_052790_0_0_9"/>
<dbReference type="UniPathway" id="UPA00541">
    <property type="reaction ID" value="UER00601"/>
</dbReference>
<dbReference type="Proteomes" id="UP000001415">
    <property type="component" value="Chromosome"/>
</dbReference>
<dbReference type="GO" id="GO:0005737">
    <property type="term" value="C:cytoplasm"/>
    <property type="evidence" value="ECO:0007669"/>
    <property type="project" value="UniProtKB-SubCell"/>
</dbReference>
<dbReference type="GO" id="GO:0008740">
    <property type="term" value="F:L-rhamnose isomerase activity"/>
    <property type="evidence" value="ECO:0007669"/>
    <property type="project" value="UniProtKB-UniRule"/>
</dbReference>
<dbReference type="GO" id="GO:0030145">
    <property type="term" value="F:manganese ion binding"/>
    <property type="evidence" value="ECO:0007669"/>
    <property type="project" value="UniProtKB-UniRule"/>
</dbReference>
<dbReference type="GO" id="GO:0019324">
    <property type="term" value="P:L-lyxose metabolic process"/>
    <property type="evidence" value="ECO:0007669"/>
    <property type="project" value="TreeGrafter"/>
</dbReference>
<dbReference type="GO" id="GO:0019301">
    <property type="term" value="P:rhamnose catabolic process"/>
    <property type="evidence" value="ECO:0007669"/>
    <property type="project" value="UniProtKB-UniRule"/>
</dbReference>
<dbReference type="Gene3D" id="3.20.20.150">
    <property type="entry name" value="Divalent-metal-dependent TIM barrel enzymes"/>
    <property type="match status" value="1"/>
</dbReference>
<dbReference type="HAMAP" id="MF_00541">
    <property type="entry name" value="RhaA"/>
    <property type="match status" value="1"/>
</dbReference>
<dbReference type="InterPro" id="IPR050337">
    <property type="entry name" value="L-rhamnose_isomerase"/>
</dbReference>
<dbReference type="InterPro" id="IPR009308">
    <property type="entry name" value="Rhamnose_isomerase"/>
</dbReference>
<dbReference type="InterPro" id="IPR036237">
    <property type="entry name" value="Xyl_isomerase-like_sf"/>
</dbReference>
<dbReference type="NCBIfam" id="NF002203">
    <property type="entry name" value="PRK01076.1"/>
    <property type="match status" value="1"/>
</dbReference>
<dbReference type="NCBIfam" id="TIGR01748">
    <property type="entry name" value="rhaA"/>
    <property type="match status" value="1"/>
</dbReference>
<dbReference type="PANTHER" id="PTHR30268">
    <property type="entry name" value="L-RHAMNOSE ISOMERASE"/>
    <property type="match status" value="1"/>
</dbReference>
<dbReference type="PANTHER" id="PTHR30268:SF0">
    <property type="entry name" value="L-RHAMNOSE ISOMERASE"/>
    <property type="match status" value="1"/>
</dbReference>
<dbReference type="Pfam" id="PF06134">
    <property type="entry name" value="RhaA"/>
    <property type="match status" value="1"/>
</dbReference>
<dbReference type="SUPFAM" id="SSF51658">
    <property type="entry name" value="Xylose isomerase-like"/>
    <property type="match status" value="1"/>
</dbReference>
<accession>Q838L2</accession>
<evidence type="ECO:0000255" key="1">
    <source>
        <dbReference type="HAMAP-Rule" id="MF_00541"/>
    </source>
</evidence>
<sequence>MTTITQKYEEAKEKYASIDVDTEAVLEKMADVKISMHVWQGDDVRGFLSEDELSGGISVTGNYPGVARSPQQLRQDLEKAFSLIPGKHKLNLHAIYLDTEERVDLNELEPKHFEPWVTWAKENGLGLDFNPTFFSHPMYRDGFTLAHPNPQVRDFWIEHGKRSRRIAEYFGRELGQVAVNNFWVPDGFKDNPVDRLTPRKRLMASLDEIFSEEIDPAYTVDAMESKLFGIGSEAYTVGSHEFYMGYGLTRNKLICLDAGHFHPTEVISNKLSSLSLFGEGMLLHVSRPVRWDSDHVVIMDDELQEIAKELVRNDLLGKTHVGLDFFDATINRVAAWVIGTRNTQKALMKAMLEPTNVLKEAELIGDFTTRLALTEELKDFPFADIWNYYCQENHVPIGLDWLTDVQEYEKVILPTRQLPTGKDSCRFS</sequence>
<feature type="chain" id="PRO_0000090555" description="L-rhamnose isomerase">
    <location>
        <begin position="1"/>
        <end position="428"/>
    </location>
</feature>
<feature type="binding site" evidence="1">
    <location>
        <position position="260"/>
    </location>
    <ligand>
        <name>Mn(2+)</name>
        <dbReference type="ChEBI" id="CHEBI:29035"/>
    </ligand>
</feature>
<feature type="binding site" evidence="1">
    <location>
        <position position="292"/>
    </location>
    <ligand>
        <name>Mn(2+)</name>
        <dbReference type="ChEBI" id="CHEBI:29035"/>
    </ligand>
</feature>
<feature type="binding site" evidence="1">
    <location>
        <position position="294"/>
    </location>
    <ligand>
        <name>Mn(2+)</name>
        <dbReference type="ChEBI" id="CHEBI:29035"/>
    </ligand>
</feature>
<protein>
    <recommendedName>
        <fullName evidence="1">L-rhamnose isomerase</fullName>
        <ecNumber evidence="1">5.3.1.14</ecNumber>
    </recommendedName>
</protein>